<keyword id="KW-0256">Endoplasmic reticulum</keyword>
<keyword id="KW-0472">Membrane</keyword>
<keyword id="KW-1185">Reference proteome</keyword>
<keyword id="KW-0735">Signal-anchor</keyword>
<keyword id="KW-0812">Transmembrane</keyword>
<keyword id="KW-1133">Transmembrane helix</keyword>
<feature type="chain" id="PRO_0000386617" description="Dolichyl-diphosphooligosaccharide--protein glycosyltransferase subunit 4">
    <location>
        <begin position="1"/>
        <end position="40"/>
    </location>
</feature>
<feature type="topological domain" description="Lumenal" evidence="4">
    <location>
        <begin position="1"/>
        <end position="4"/>
    </location>
</feature>
<feature type="transmembrane region" description="Helical" evidence="4">
    <location>
        <begin position="5"/>
        <end position="25"/>
    </location>
</feature>
<feature type="topological domain" description="Cytoplasmic" evidence="4">
    <location>
        <begin position="26"/>
        <end position="40"/>
    </location>
</feature>
<sequence>MITDVQLAIFSNVLGVFLFLLVVAYHYINANTGKIGPKAK</sequence>
<organism>
    <name type="scientific">Drosophila willistoni</name>
    <name type="common">Fruit fly</name>
    <dbReference type="NCBI Taxonomy" id="7260"/>
    <lineage>
        <taxon>Eukaryota</taxon>
        <taxon>Metazoa</taxon>
        <taxon>Ecdysozoa</taxon>
        <taxon>Arthropoda</taxon>
        <taxon>Hexapoda</taxon>
        <taxon>Insecta</taxon>
        <taxon>Pterygota</taxon>
        <taxon>Neoptera</taxon>
        <taxon>Endopterygota</taxon>
        <taxon>Diptera</taxon>
        <taxon>Brachycera</taxon>
        <taxon>Muscomorpha</taxon>
        <taxon>Ephydroidea</taxon>
        <taxon>Drosophilidae</taxon>
        <taxon>Drosophila</taxon>
        <taxon>Sophophora</taxon>
    </lineage>
</organism>
<dbReference type="EMBL" id="CH963846">
    <property type="protein sequence ID" value="EDW72324.1"/>
    <property type="status" value="ALT_SEQ"/>
    <property type="molecule type" value="Genomic_DNA"/>
</dbReference>
<dbReference type="SMR" id="B4MJN5"/>
<dbReference type="STRING" id="7260.B4MJN5"/>
<dbReference type="GeneID" id="6638468"/>
<dbReference type="KEGG" id="dwi:6638468"/>
<dbReference type="Proteomes" id="UP000007798">
    <property type="component" value="Unassembled WGS sequence"/>
</dbReference>
<dbReference type="GO" id="GO:0008250">
    <property type="term" value="C:oligosaccharyltransferase complex"/>
    <property type="evidence" value="ECO:0000250"/>
    <property type="project" value="UniProtKB"/>
</dbReference>
<dbReference type="GO" id="GO:0006487">
    <property type="term" value="P:protein N-linked glycosylation"/>
    <property type="evidence" value="ECO:0000250"/>
    <property type="project" value="UniProtKB"/>
</dbReference>
<dbReference type="GO" id="GO:0018279">
    <property type="term" value="P:protein N-linked glycosylation via asparagine"/>
    <property type="evidence" value="ECO:0007669"/>
    <property type="project" value="TreeGrafter"/>
</dbReference>
<dbReference type="InterPro" id="IPR018943">
    <property type="entry name" value="Oligosaccaryltransferase"/>
</dbReference>
<dbReference type="InterPro" id="IPR051307">
    <property type="entry name" value="OST4"/>
</dbReference>
<dbReference type="InterPro" id="IPR036330">
    <property type="entry name" value="Ost4p_sf"/>
</dbReference>
<dbReference type="PANTHER" id="PTHR48164">
    <property type="entry name" value="DOLICHYL-DIPHOSPHOOLIGOSACCHARIDE--PROTEIN GLYCOSYLTRANSFERASE SUBUNIT 4"/>
    <property type="match status" value="1"/>
</dbReference>
<dbReference type="PANTHER" id="PTHR48164:SF1">
    <property type="entry name" value="DOLICHYL-DIPHOSPHOOLIGOSACCHARIDE--PROTEIN GLYCOSYLTRANSFERASE SUBUNIT 4"/>
    <property type="match status" value="1"/>
</dbReference>
<dbReference type="Pfam" id="PF10215">
    <property type="entry name" value="Ost4"/>
    <property type="match status" value="1"/>
</dbReference>
<dbReference type="SUPFAM" id="SSF103464">
    <property type="entry name" value="Oligosaccharyltransferase subunit ost4p"/>
    <property type="match status" value="1"/>
</dbReference>
<protein>
    <recommendedName>
        <fullName evidence="3">Dolichyl-diphosphooligosaccharide--protein glycosyltransferase subunit 4</fullName>
    </recommendedName>
</protein>
<accession>B4MJN5</accession>
<proteinExistence type="inferred from homology"/>
<comment type="function">
    <text evidence="2">Subunit of the oligosaccharyl transferase (OST) complex that catalyzes the initial transfer of a defined glycan (Glc(3)Man(9)GlcNAc(2) in eukaryotes) from the lipid carrier dolichol-pyrophosphate to an asparagine residue within an Asn-X-Ser/Thr consensus motif in nascent polypeptide chains, the first step in protein N-glycosylation. N-glycosylation occurs cotranslationally and the complex associates with the Sec61 complex at the channel-forming translocon complex that mediates protein translocation across the endoplasmic reticulum (ER). All subunits are required for a maximal enzyme activity.</text>
</comment>
<comment type="subunit">
    <text evidence="2">Component of the oligosaccharyltransferase (OST) complex.</text>
</comment>
<comment type="subcellular location">
    <subcellularLocation>
        <location evidence="1">Endoplasmic reticulum membrane</location>
        <topology evidence="1">Single-pass type III membrane protein</topology>
    </subcellularLocation>
</comment>
<comment type="similarity">
    <text evidence="4">Belongs to the OST4 family.</text>
</comment>
<comment type="sequence caution" evidence="5">
    <conflict type="erroneous gene model prediction">
        <sequence resource="EMBL-CDS" id="EDW72324"/>
    </conflict>
</comment>
<evidence type="ECO:0000250" key="1"/>
<evidence type="ECO:0000250" key="2">
    <source>
        <dbReference type="UniProtKB" id="P0C6T2"/>
    </source>
</evidence>
<evidence type="ECO:0000250" key="3">
    <source>
        <dbReference type="UniProtKB" id="Q99380"/>
    </source>
</evidence>
<evidence type="ECO:0000255" key="4"/>
<evidence type="ECO:0000305" key="5"/>
<evidence type="ECO:0000312" key="6">
    <source>
        <dbReference type="EMBL" id="EDW72324.1"/>
    </source>
</evidence>
<gene>
    <name type="ORF">GK20863</name>
</gene>
<name>OST4_DROWI</name>
<reference evidence="6" key="1">
    <citation type="journal article" date="2007" name="Nature">
        <title>Evolution of genes and genomes on the Drosophila phylogeny.</title>
        <authorList>
            <consortium name="Drosophila 12 genomes consortium"/>
        </authorList>
    </citation>
    <scope>NUCLEOTIDE SEQUENCE [LARGE SCALE GENOMIC DNA]</scope>
    <source>
        <strain evidence="6">Tucson 14030-0811.24</strain>
    </source>
</reference>